<dbReference type="EC" id="3.1.21.2" evidence="1"/>
<dbReference type="EMBL" id="CP000001">
    <property type="protein sequence ID" value="AAU16235.1"/>
    <property type="molecule type" value="Genomic_DNA"/>
</dbReference>
<dbReference type="RefSeq" id="WP_000912466.1">
    <property type="nucleotide sequence ID" value="NZ_CP009968.1"/>
</dbReference>
<dbReference type="SMR" id="Q634Q3"/>
<dbReference type="KEGG" id="bcz:BCE33L4034"/>
<dbReference type="PATRIC" id="fig|288681.22.peg.1357"/>
<dbReference type="Proteomes" id="UP000002612">
    <property type="component" value="Chromosome"/>
</dbReference>
<dbReference type="GO" id="GO:0008833">
    <property type="term" value="F:deoxyribonuclease IV (phage-T4-induced) activity"/>
    <property type="evidence" value="ECO:0007669"/>
    <property type="project" value="UniProtKB-UniRule"/>
</dbReference>
<dbReference type="GO" id="GO:0003677">
    <property type="term" value="F:DNA binding"/>
    <property type="evidence" value="ECO:0007669"/>
    <property type="project" value="InterPro"/>
</dbReference>
<dbReference type="GO" id="GO:0003906">
    <property type="term" value="F:DNA-(apurinic or apyrimidinic site) endonuclease activity"/>
    <property type="evidence" value="ECO:0007669"/>
    <property type="project" value="TreeGrafter"/>
</dbReference>
<dbReference type="GO" id="GO:0008081">
    <property type="term" value="F:phosphoric diester hydrolase activity"/>
    <property type="evidence" value="ECO:0007669"/>
    <property type="project" value="TreeGrafter"/>
</dbReference>
<dbReference type="GO" id="GO:0008270">
    <property type="term" value="F:zinc ion binding"/>
    <property type="evidence" value="ECO:0007669"/>
    <property type="project" value="UniProtKB-UniRule"/>
</dbReference>
<dbReference type="GO" id="GO:0006284">
    <property type="term" value="P:base-excision repair"/>
    <property type="evidence" value="ECO:0007669"/>
    <property type="project" value="TreeGrafter"/>
</dbReference>
<dbReference type="CDD" id="cd00019">
    <property type="entry name" value="AP2Ec"/>
    <property type="match status" value="1"/>
</dbReference>
<dbReference type="FunFam" id="3.20.20.150:FF:000001">
    <property type="entry name" value="Probable endonuclease 4"/>
    <property type="match status" value="1"/>
</dbReference>
<dbReference type="Gene3D" id="3.20.20.150">
    <property type="entry name" value="Divalent-metal-dependent TIM barrel enzymes"/>
    <property type="match status" value="1"/>
</dbReference>
<dbReference type="HAMAP" id="MF_00152">
    <property type="entry name" value="Nfo"/>
    <property type="match status" value="1"/>
</dbReference>
<dbReference type="InterPro" id="IPR001719">
    <property type="entry name" value="AP_endonuc_2"/>
</dbReference>
<dbReference type="InterPro" id="IPR018246">
    <property type="entry name" value="AP_endonuc_F2_Zn_BS"/>
</dbReference>
<dbReference type="InterPro" id="IPR036237">
    <property type="entry name" value="Xyl_isomerase-like_sf"/>
</dbReference>
<dbReference type="InterPro" id="IPR013022">
    <property type="entry name" value="Xyl_isomerase-like_TIM-brl"/>
</dbReference>
<dbReference type="NCBIfam" id="TIGR00587">
    <property type="entry name" value="nfo"/>
    <property type="match status" value="1"/>
</dbReference>
<dbReference type="NCBIfam" id="NF002196">
    <property type="entry name" value="PRK01060.1-1"/>
    <property type="match status" value="1"/>
</dbReference>
<dbReference type="PANTHER" id="PTHR21445:SF0">
    <property type="entry name" value="APURINIC-APYRIMIDINIC ENDONUCLEASE"/>
    <property type="match status" value="1"/>
</dbReference>
<dbReference type="PANTHER" id="PTHR21445">
    <property type="entry name" value="ENDONUCLEASE IV ENDODEOXYRIBONUCLEASE IV"/>
    <property type="match status" value="1"/>
</dbReference>
<dbReference type="Pfam" id="PF01261">
    <property type="entry name" value="AP_endonuc_2"/>
    <property type="match status" value="1"/>
</dbReference>
<dbReference type="SMART" id="SM00518">
    <property type="entry name" value="AP2Ec"/>
    <property type="match status" value="1"/>
</dbReference>
<dbReference type="SUPFAM" id="SSF51658">
    <property type="entry name" value="Xylose isomerase-like"/>
    <property type="match status" value="1"/>
</dbReference>
<dbReference type="PROSITE" id="PS00729">
    <property type="entry name" value="AP_NUCLEASE_F2_1"/>
    <property type="match status" value="1"/>
</dbReference>
<dbReference type="PROSITE" id="PS00730">
    <property type="entry name" value="AP_NUCLEASE_F2_2"/>
    <property type="match status" value="1"/>
</dbReference>
<dbReference type="PROSITE" id="PS00731">
    <property type="entry name" value="AP_NUCLEASE_F2_3"/>
    <property type="match status" value="1"/>
</dbReference>
<dbReference type="PROSITE" id="PS51432">
    <property type="entry name" value="AP_NUCLEASE_F2_4"/>
    <property type="match status" value="1"/>
</dbReference>
<keyword id="KW-0227">DNA damage</keyword>
<keyword id="KW-0234">DNA repair</keyword>
<keyword id="KW-0255">Endonuclease</keyword>
<keyword id="KW-0378">Hydrolase</keyword>
<keyword id="KW-0479">Metal-binding</keyword>
<keyword id="KW-0540">Nuclease</keyword>
<keyword id="KW-0862">Zinc</keyword>
<name>END4_BACCZ</name>
<comment type="function">
    <text evidence="1">Endonuclease IV plays a role in DNA repair. It cleaves phosphodiester bonds at apurinic or apyrimidinic (AP) sites, generating a 3'-hydroxyl group and a 5'-terminal sugar phosphate.</text>
</comment>
<comment type="catalytic activity">
    <reaction evidence="1">
        <text>Endonucleolytic cleavage to 5'-phosphooligonucleotide end-products.</text>
        <dbReference type="EC" id="3.1.21.2"/>
    </reaction>
</comment>
<comment type="cofactor">
    <cofactor evidence="1">
        <name>Zn(2+)</name>
        <dbReference type="ChEBI" id="CHEBI:29105"/>
    </cofactor>
    <text evidence="1">Binds 3 Zn(2+) ions.</text>
</comment>
<comment type="similarity">
    <text evidence="1">Belongs to the AP endonuclease 2 family.</text>
</comment>
<protein>
    <recommendedName>
        <fullName evidence="1">Probable endonuclease 4</fullName>
        <ecNumber evidence="1">3.1.21.2</ecNumber>
    </recommendedName>
    <alternativeName>
        <fullName evidence="1">Endodeoxyribonuclease IV</fullName>
    </alternativeName>
    <alternativeName>
        <fullName evidence="1">Endonuclease IV</fullName>
    </alternativeName>
</protein>
<evidence type="ECO:0000255" key="1">
    <source>
        <dbReference type="HAMAP-Rule" id="MF_00152"/>
    </source>
</evidence>
<reference key="1">
    <citation type="journal article" date="2006" name="J. Bacteriol.">
        <title>Pathogenomic sequence analysis of Bacillus cereus and Bacillus thuringiensis isolates closely related to Bacillus anthracis.</title>
        <authorList>
            <person name="Han C.S."/>
            <person name="Xie G."/>
            <person name="Challacombe J.F."/>
            <person name="Altherr M.R."/>
            <person name="Bhotika S.S."/>
            <person name="Bruce D."/>
            <person name="Campbell C.S."/>
            <person name="Campbell M.L."/>
            <person name="Chen J."/>
            <person name="Chertkov O."/>
            <person name="Cleland C."/>
            <person name="Dimitrijevic M."/>
            <person name="Doggett N.A."/>
            <person name="Fawcett J.J."/>
            <person name="Glavina T."/>
            <person name="Goodwin L.A."/>
            <person name="Hill K.K."/>
            <person name="Hitchcock P."/>
            <person name="Jackson P.J."/>
            <person name="Keim P."/>
            <person name="Kewalramani A.R."/>
            <person name="Longmire J."/>
            <person name="Lucas S."/>
            <person name="Malfatti S."/>
            <person name="McMurry K."/>
            <person name="Meincke L.J."/>
            <person name="Misra M."/>
            <person name="Moseman B.L."/>
            <person name="Mundt M."/>
            <person name="Munk A.C."/>
            <person name="Okinaka R.T."/>
            <person name="Parson-Quintana B."/>
            <person name="Reilly L.P."/>
            <person name="Richardson P."/>
            <person name="Robinson D.L."/>
            <person name="Rubin E."/>
            <person name="Saunders E."/>
            <person name="Tapia R."/>
            <person name="Tesmer J.G."/>
            <person name="Thayer N."/>
            <person name="Thompson L.S."/>
            <person name="Tice H."/>
            <person name="Ticknor L.O."/>
            <person name="Wills P.L."/>
            <person name="Brettin T.S."/>
            <person name="Gilna P."/>
        </authorList>
    </citation>
    <scope>NUCLEOTIDE SEQUENCE [LARGE SCALE GENOMIC DNA]</scope>
    <source>
        <strain>ZK / E33L</strain>
    </source>
</reference>
<proteinExistence type="inferred from homology"/>
<gene>
    <name evidence="1" type="primary">nfo</name>
    <name type="ordered locus">BCE33L4034</name>
</gene>
<organism>
    <name type="scientific">Bacillus cereus (strain ZK / E33L)</name>
    <dbReference type="NCBI Taxonomy" id="288681"/>
    <lineage>
        <taxon>Bacteria</taxon>
        <taxon>Bacillati</taxon>
        <taxon>Bacillota</taxon>
        <taxon>Bacilli</taxon>
        <taxon>Bacillales</taxon>
        <taxon>Bacillaceae</taxon>
        <taxon>Bacillus</taxon>
        <taxon>Bacillus cereus group</taxon>
    </lineage>
</organism>
<feature type="chain" id="PRO_0000190821" description="Probable endonuclease 4">
    <location>
        <begin position="1"/>
        <end position="298"/>
    </location>
</feature>
<feature type="binding site" evidence="1">
    <location>
        <position position="69"/>
    </location>
    <ligand>
        <name>Zn(2+)</name>
        <dbReference type="ChEBI" id="CHEBI:29105"/>
        <label>1</label>
    </ligand>
</feature>
<feature type="binding site" evidence="1">
    <location>
        <position position="111"/>
    </location>
    <ligand>
        <name>Zn(2+)</name>
        <dbReference type="ChEBI" id="CHEBI:29105"/>
        <label>1</label>
    </ligand>
</feature>
<feature type="binding site" evidence="1">
    <location>
        <position position="146"/>
    </location>
    <ligand>
        <name>Zn(2+)</name>
        <dbReference type="ChEBI" id="CHEBI:29105"/>
        <label>1</label>
    </ligand>
</feature>
<feature type="binding site" evidence="1">
    <location>
        <position position="146"/>
    </location>
    <ligand>
        <name>Zn(2+)</name>
        <dbReference type="ChEBI" id="CHEBI:29105"/>
        <label>2</label>
    </ligand>
</feature>
<feature type="binding site" evidence="1">
    <location>
        <position position="180"/>
    </location>
    <ligand>
        <name>Zn(2+)</name>
        <dbReference type="ChEBI" id="CHEBI:29105"/>
        <label>2</label>
    </ligand>
</feature>
<feature type="binding site" evidence="1">
    <location>
        <position position="183"/>
    </location>
    <ligand>
        <name>Zn(2+)</name>
        <dbReference type="ChEBI" id="CHEBI:29105"/>
        <label>3</label>
    </ligand>
</feature>
<feature type="binding site" evidence="1">
    <location>
        <position position="215"/>
    </location>
    <ligand>
        <name>Zn(2+)</name>
        <dbReference type="ChEBI" id="CHEBI:29105"/>
        <label>2</label>
    </ligand>
</feature>
<feature type="binding site" evidence="1">
    <location>
        <position position="228"/>
    </location>
    <ligand>
        <name>Zn(2+)</name>
        <dbReference type="ChEBI" id="CHEBI:29105"/>
        <label>3</label>
    </ligand>
</feature>
<feature type="binding site" evidence="1">
    <location>
        <position position="230"/>
    </location>
    <ligand>
        <name>Zn(2+)</name>
        <dbReference type="ChEBI" id="CHEBI:29105"/>
        <label>3</label>
    </ligand>
</feature>
<feature type="binding site" evidence="1">
    <location>
        <position position="260"/>
    </location>
    <ligand>
        <name>Zn(2+)</name>
        <dbReference type="ChEBI" id="CHEBI:29105"/>
        <label>2</label>
    </ligand>
</feature>
<accession>Q634Q3</accession>
<sequence length="298" mass="32910">MLKIGSHVSMSGKKMLLAASEEAVSYGATTFMIYTGAPQNTRRKPIEELNIEAGRKHMEQNGIEEIIVHAPYIINVGNTTKPETFQLGVDFLRMEIERTSALGVAKQIVLHPGAHVGAGADAGIQQIIKGLNEVLTPDQTVNIALETMAGKGTECGRSFEEIAKIIDGVKYNEKLSVCFDTCHTHDAGYDIVNDFDGVLNEFDKIVGIDRLQVLHINDSKNVRGAGKDRHENIGFGHIGYKALHHIVHHPQLTHVPKILETPYVGEDKKDKKPPYKLEIEMLKNGTFDEGLLEKIKAQ</sequence>